<accession>P65313</accession>
<accession>A0A1R3XY46</accession>
<accession>Q11065</accession>
<accession>X2BHG1</accession>
<comment type="subcellular location">
    <subcellularLocation>
        <location evidence="3">Cell membrane</location>
        <topology evidence="3">Lipid-anchor</topology>
    </subcellularLocation>
</comment>
<sequence>MPGVWSPPCPTTPRVGVVAALVAATLTGCGSGDSTVAKTPEATPSLSTAHPAPPSSEPSPPSATAAPPSNHSAAPVDPCAVNLASPTIAKVVSELPRDPRSEQPWNPEPLAGNYNECAQLSAVVIKANTNAGNPTTRAVMFHLGKYIPQGVPDTYGFTGIDTSQCTGDTVALTYASGIGLNNVVKFRWNGGGVELIGNTTGG</sequence>
<proteinExistence type="inferred from homology"/>
<gene>
    <name type="primary">lprE</name>
    <name type="ordered locus">BQ2027_MB1284C</name>
</gene>
<feature type="signal peptide" evidence="1">
    <location>
        <begin position="1"/>
        <end position="28"/>
    </location>
</feature>
<feature type="chain" id="PRO_0000018139" description="Putative lipoprotein LprE">
    <location>
        <begin position="29"/>
        <end position="202"/>
    </location>
</feature>
<feature type="region of interest" description="Disordered" evidence="2">
    <location>
        <begin position="29"/>
        <end position="78"/>
    </location>
</feature>
<feature type="compositionally biased region" description="Polar residues" evidence="2">
    <location>
        <begin position="32"/>
        <end position="46"/>
    </location>
</feature>
<feature type="compositionally biased region" description="Pro residues" evidence="2">
    <location>
        <begin position="51"/>
        <end position="61"/>
    </location>
</feature>
<feature type="compositionally biased region" description="Low complexity" evidence="2">
    <location>
        <begin position="62"/>
        <end position="75"/>
    </location>
</feature>
<feature type="lipid moiety-binding region" description="N-palmitoyl cysteine" evidence="1">
    <location>
        <position position="29"/>
    </location>
</feature>
<feature type="lipid moiety-binding region" description="S-diacylglycerol cysteine" evidence="1">
    <location>
        <position position="29"/>
    </location>
</feature>
<evidence type="ECO:0000255" key="1"/>
<evidence type="ECO:0000256" key="2">
    <source>
        <dbReference type="SAM" id="MobiDB-lite"/>
    </source>
</evidence>
<evidence type="ECO:0000305" key="3"/>
<reference key="1">
    <citation type="journal article" date="2003" name="Proc. Natl. Acad. Sci. U.S.A.">
        <title>The complete genome sequence of Mycobacterium bovis.</title>
        <authorList>
            <person name="Garnier T."/>
            <person name="Eiglmeier K."/>
            <person name="Camus J.-C."/>
            <person name="Medina N."/>
            <person name="Mansoor H."/>
            <person name="Pryor M."/>
            <person name="Duthoy S."/>
            <person name="Grondin S."/>
            <person name="Lacroix C."/>
            <person name="Monsempe C."/>
            <person name="Simon S."/>
            <person name="Harris B."/>
            <person name="Atkin R."/>
            <person name="Doggett J."/>
            <person name="Mayes R."/>
            <person name="Keating L."/>
            <person name="Wheeler P.R."/>
            <person name="Parkhill J."/>
            <person name="Barrell B.G."/>
            <person name="Cole S.T."/>
            <person name="Gordon S.V."/>
            <person name="Hewinson R.G."/>
        </authorList>
    </citation>
    <scope>NUCLEOTIDE SEQUENCE [LARGE SCALE GENOMIC DNA]</scope>
    <source>
        <strain>ATCC BAA-935 / AF2122/97</strain>
    </source>
</reference>
<reference key="2">
    <citation type="journal article" date="2017" name="Genome Announc.">
        <title>Updated reference genome sequence and annotation of Mycobacterium bovis AF2122/97.</title>
        <authorList>
            <person name="Malone K.M."/>
            <person name="Farrell D."/>
            <person name="Stuber T.P."/>
            <person name="Schubert O.T."/>
            <person name="Aebersold R."/>
            <person name="Robbe-Austerman S."/>
            <person name="Gordon S.V."/>
        </authorList>
    </citation>
    <scope>NUCLEOTIDE SEQUENCE [LARGE SCALE GENOMIC DNA]</scope>
    <scope>GENOME REANNOTATION</scope>
    <source>
        <strain>ATCC BAA-935 / AF2122/97</strain>
    </source>
</reference>
<name>LPRE_MYCBO</name>
<organism>
    <name type="scientific">Mycobacterium bovis (strain ATCC BAA-935 / AF2122/97)</name>
    <dbReference type="NCBI Taxonomy" id="233413"/>
    <lineage>
        <taxon>Bacteria</taxon>
        <taxon>Bacillati</taxon>
        <taxon>Actinomycetota</taxon>
        <taxon>Actinomycetes</taxon>
        <taxon>Mycobacteriales</taxon>
        <taxon>Mycobacteriaceae</taxon>
        <taxon>Mycobacterium</taxon>
        <taxon>Mycobacterium tuberculosis complex</taxon>
    </lineage>
</organism>
<dbReference type="EMBL" id="LT708304">
    <property type="protein sequence ID" value="SIT99885.1"/>
    <property type="molecule type" value="Genomic_DNA"/>
</dbReference>
<dbReference type="RefSeq" id="NP_854938.1">
    <property type="nucleotide sequence ID" value="NC_002945.3"/>
</dbReference>
<dbReference type="RefSeq" id="WP_003406334.1">
    <property type="nucleotide sequence ID" value="NC_002945.4"/>
</dbReference>
<dbReference type="KEGG" id="mbo:BQ2027_MB1284C"/>
<dbReference type="PATRIC" id="fig|233413.5.peg.1407"/>
<dbReference type="Proteomes" id="UP000001419">
    <property type="component" value="Chromosome"/>
</dbReference>
<dbReference type="GO" id="GO:0005886">
    <property type="term" value="C:plasma membrane"/>
    <property type="evidence" value="ECO:0007669"/>
    <property type="project" value="UniProtKB-SubCell"/>
</dbReference>
<dbReference type="InterPro" id="IPR025971">
    <property type="entry name" value="LppP/LprE"/>
</dbReference>
<dbReference type="Pfam" id="PF14041">
    <property type="entry name" value="Lipoprotein_21"/>
    <property type="match status" value="1"/>
</dbReference>
<keyword id="KW-1003">Cell membrane</keyword>
<keyword id="KW-0449">Lipoprotein</keyword>
<keyword id="KW-0472">Membrane</keyword>
<keyword id="KW-0564">Palmitate</keyword>
<keyword id="KW-1185">Reference proteome</keyword>
<keyword id="KW-0732">Signal</keyword>
<protein>
    <recommendedName>
        <fullName>Putative lipoprotein LprE</fullName>
    </recommendedName>
</protein>